<feature type="peptide" id="PRO_0000395562" description="Periviscerokinin-1" evidence="4">
    <location>
        <begin position="1"/>
        <end position="9"/>
    </location>
</feature>
<feature type="modified residue" description="Pyrrolidone carboxylic acid; partial" evidence="4">
    <location>
        <position position="1"/>
    </location>
</feature>
<feature type="modified residue" description="Valine amide" evidence="4">
    <location>
        <position position="9"/>
    </location>
</feature>
<feature type="unsure residue" description="L or I" evidence="4">
    <location>
        <position position="3"/>
    </location>
</feature>
<feature type="unsure residue" description="I or L" evidence="4">
    <location>
        <position position="4"/>
    </location>
</feature>
<reference evidence="6" key="1">
    <citation type="journal article" date="2010" name="Peptides">
        <title>CAPA-peptides of praying mantids (Mantodea).</title>
        <authorList>
            <person name="Koehler R."/>
            <person name="Predel R."/>
        </authorList>
    </citation>
    <scope>PROTEIN SEQUENCE</scope>
    <scope>MASS SPECTROMETRY</scope>
    <scope>PYROGLUTAMATE FORMATION AT GLN-1</scope>
    <scope>AMIDATION AT VAL-9</scope>
    <source>
        <tissue evidence="4">Abdominal perisympathetic organs</tissue>
    </source>
</reference>
<name>PVK1_BISPU</name>
<protein>
    <recommendedName>
        <fullName evidence="5">Periviscerokinin-1</fullName>
    </recommendedName>
</protein>
<organism>
    <name type="scientific">Bisanthe pulchripennis</name>
    <name type="common">Praying mantis</name>
    <dbReference type="NCBI Taxonomy" id="765342"/>
    <lineage>
        <taxon>Eukaryota</taxon>
        <taxon>Metazoa</taxon>
        <taxon>Ecdysozoa</taxon>
        <taxon>Arthropoda</taxon>
        <taxon>Hexapoda</taxon>
        <taxon>Insecta</taxon>
        <taxon>Pterygota</taxon>
        <taxon>Neoptera</taxon>
        <taxon>Polyneoptera</taxon>
        <taxon>Dictyoptera</taxon>
        <taxon>Mantodea</taxon>
        <taxon>Eumantodea</taxon>
        <taxon>Mantoidea</taxon>
        <taxon>Mantidae</taxon>
        <taxon>Tenoderinae</taxon>
        <taxon>Paramantini</taxon>
        <taxon>Bisanthe</taxon>
    </lineage>
</organism>
<dbReference type="GO" id="GO:0005576">
    <property type="term" value="C:extracellular region"/>
    <property type="evidence" value="ECO:0007669"/>
    <property type="project" value="UniProtKB-SubCell"/>
</dbReference>
<dbReference type="GO" id="GO:0007218">
    <property type="term" value="P:neuropeptide signaling pathway"/>
    <property type="evidence" value="ECO:0007669"/>
    <property type="project" value="UniProtKB-KW"/>
</dbReference>
<dbReference type="InterPro" id="IPR013231">
    <property type="entry name" value="Periviscerokinin"/>
</dbReference>
<dbReference type="Pfam" id="PF08259">
    <property type="entry name" value="Periviscerokin"/>
    <property type="match status" value="1"/>
</dbReference>
<keyword id="KW-0027">Amidation</keyword>
<keyword id="KW-0903">Direct protein sequencing</keyword>
<keyword id="KW-0527">Neuropeptide</keyword>
<keyword id="KW-0873">Pyrrolidone carboxylic acid</keyword>
<keyword id="KW-0964">Secreted</keyword>
<sequence length="9" mass="1026">QGLIPFPRV</sequence>
<evidence type="ECO:0000250" key="1">
    <source>
        <dbReference type="UniProtKB" id="P83923"/>
    </source>
</evidence>
<evidence type="ECO:0000250" key="2">
    <source>
        <dbReference type="UniProtKB" id="P84375"/>
    </source>
</evidence>
<evidence type="ECO:0000255" key="3"/>
<evidence type="ECO:0000269" key="4">
    <source>
    </source>
</evidence>
<evidence type="ECO:0000303" key="5">
    <source>
    </source>
</evidence>
<evidence type="ECO:0000305" key="6"/>
<accession>P86644</accession>
<proteinExistence type="evidence at protein level"/>
<comment type="function">
    <text evidence="1">Mediates visceral muscle contractile activity (myotropic activity).</text>
</comment>
<comment type="subcellular location">
    <subcellularLocation>
        <location evidence="2">Secreted</location>
    </subcellularLocation>
</comment>
<comment type="mass spectrometry" mass="1025.6" method="MALDI" evidence="4"/>
<comment type="mass spectrometry" mass="1008.6" method="MALDI" evidence="4">
    <text>With pyroglutamate at Gln-1.</text>
</comment>
<comment type="similarity">
    <text evidence="3">Belongs to the periviscerokinin family.</text>
</comment>